<dbReference type="EC" id="1.14.11.-"/>
<dbReference type="EMBL" id="BC045252">
    <property type="protein sequence ID" value="AAH45252.1"/>
    <property type="molecule type" value="mRNA"/>
</dbReference>
<dbReference type="RefSeq" id="NP_001080514.1">
    <property type="nucleotide sequence ID" value="NM_001087045.1"/>
</dbReference>
<dbReference type="SMR" id="Q7ZX37"/>
<dbReference type="DNASU" id="380206"/>
<dbReference type="GeneID" id="380206"/>
<dbReference type="KEGG" id="xla:380206"/>
<dbReference type="AGR" id="Xenbase:XB-GENE-6078236"/>
<dbReference type="CTD" id="380206"/>
<dbReference type="Xenbase" id="XB-GENE-6078236">
    <property type="gene designation" value="jmjd6.S"/>
</dbReference>
<dbReference type="OMA" id="RFHEKEM"/>
<dbReference type="OrthoDB" id="424465at2759"/>
<dbReference type="Proteomes" id="UP000186698">
    <property type="component" value="Chromosome 9_10S"/>
</dbReference>
<dbReference type="Bgee" id="380206">
    <property type="expression patterns" value="Expressed in egg cell and 19 other cell types or tissues"/>
</dbReference>
<dbReference type="GO" id="GO:0005737">
    <property type="term" value="C:cytoplasm"/>
    <property type="evidence" value="ECO:0000250"/>
    <property type="project" value="UniProtKB"/>
</dbReference>
<dbReference type="GO" id="GO:0005730">
    <property type="term" value="C:nucleolus"/>
    <property type="evidence" value="ECO:0000250"/>
    <property type="project" value="UniProtKB"/>
</dbReference>
<dbReference type="GO" id="GO:0005654">
    <property type="term" value="C:nucleoplasm"/>
    <property type="evidence" value="ECO:0000250"/>
    <property type="project" value="UniProtKB"/>
</dbReference>
<dbReference type="GO" id="GO:0005634">
    <property type="term" value="C:nucleus"/>
    <property type="evidence" value="ECO:0000250"/>
    <property type="project" value="UniProtKB"/>
</dbReference>
<dbReference type="GO" id="GO:0032452">
    <property type="term" value="F:histone demethylase activity"/>
    <property type="evidence" value="ECO:0000250"/>
    <property type="project" value="UniProtKB"/>
</dbReference>
<dbReference type="GO" id="GO:0033746">
    <property type="term" value="F:histone H3R2 demethylase activity"/>
    <property type="evidence" value="ECO:0000250"/>
    <property type="project" value="UniProtKB"/>
</dbReference>
<dbReference type="GO" id="GO:0033749">
    <property type="term" value="F:histone H4R3 demethylase activity"/>
    <property type="evidence" value="ECO:0000250"/>
    <property type="project" value="UniProtKB"/>
</dbReference>
<dbReference type="GO" id="GO:0046872">
    <property type="term" value="F:metal ion binding"/>
    <property type="evidence" value="ECO:0007669"/>
    <property type="project" value="UniProtKB-KW"/>
</dbReference>
<dbReference type="GO" id="GO:0106140">
    <property type="term" value="F:P-TEFb complex binding"/>
    <property type="evidence" value="ECO:0000318"/>
    <property type="project" value="GO_Central"/>
</dbReference>
<dbReference type="GO" id="GO:0070815">
    <property type="term" value="F:peptidyl-lysine 5-dioxygenase activity"/>
    <property type="evidence" value="ECO:0000250"/>
    <property type="project" value="UniProtKB"/>
</dbReference>
<dbReference type="GO" id="GO:0003727">
    <property type="term" value="F:single-stranded RNA binding"/>
    <property type="evidence" value="ECO:0000250"/>
    <property type="project" value="UniProtKB"/>
</dbReference>
<dbReference type="GO" id="GO:0030154">
    <property type="term" value="P:cell differentiation"/>
    <property type="evidence" value="ECO:0007669"/>
    <property type="project" value="UniProtKB-KW"/>
</dbReference>
<dbReference type="GO" id="GO:0006397">
    <property type="term" value="P:mRNA processing"/>
    <property type="evidence" value="ECO:0007669"/>
    <property type="project" value="UniProtKB-KW"/>
</dbReference>
<dbReference type="GO" id="GO:0018395">
    <property type="term" value="P:peptidyl-lysine hydroxylation to 5-hydroxy-L-lysine"/>
    <property type="evidence" value="ECO:0000250"/>
    <property type="project" value="UniProtKB"/>
</dbReference>
<dbReference type="GO" id="GO:0006909">
    <property type="term" value="P:phagocytosis"/>
    <property type="evidence" value="ECO:0000318"/>
    <property type="project" value="GO_Central"/>
</dbReference>
<dbReference type="GO" id="GO:0051260">
    <property type="term" value="P:protein homooligomerization"/>
    <property type="evidence" value="ECO:0000250"/>
    <property type="project" value="UniProtKB"/>
</dbReference>
<dbReference type="GO" id="GO:0048024">
    <property type="term" value="P:regulation of mRNA splicing, via spliceosome"/>
    <property type="evidence" value="ECO:0000250"/>
    <property type="project" value="UniProtKB"/>
</dbReference>
<dbReference type="GO" id="GO:0008380">
    <property type="term" value="P:RNA splicing"/>
    <property type="evidence" value="ECO:0007669"/>
    <property type="project" value="UniProtKB-KW"/>
</dbReference>
<dbReference type="GO" id="GO:0002040">
    <property type="term" value="P:sprouting angiogenesis"/>
    <property type="evidence" value="ECO:0000250"/>
    <property type="project" value="UniProtKB"/>
</dbReference>
<dbReference type="FunFam" id="1.20.1280.270:FF:000001">
    <property type="entry name" value="Bifunctional arginine demethylase and lysyl-hydroxylase JMJD6"/>
    <property type="match status" value="1"/>
</dbReference>
<dbReference type="FunFam" id="2.60.120.650:FF:000010">
    <property type="entry name" value="bifunctional arginine demethylase and lysyl-hydroxylase JMJD6 isoform X2"/>
    <property type="match status" value="1"/>
</dbReference>
<dbReference type="Gene3D" id="1.20.1280.270">
    <property type="match status" value="1"/>
</dbReference>
<dbReference type="Gene3D" id="2.60.120.650">
    <property type="entry name" value="Cupin"/>
    <property type="match status" value="1"/>
</dbReference>
<dbReference type="InterPro" id="IPR003347">
    <property type="entry name" value="JmjC_dom"/>
</dbReference>
<dbReference type="InterPro" id="IPR050910">
    <property type="entry name" value="JMJD6_ArgDemeth/LysHydrox"/>
</dbReference>
<dbReference type="PANTHER" id="PTHR12480">
    <property type="entry name" value="ARGININE DEMETHYLASE AND LYSYL-HYDROXYLASE JMJD"/>
    <property type="match status" value="1"/>
</dbReference>
<dbReference type="PANTHER" id="PTHR12480:SF32">
    <property type="entry name" value="BIFUNCTIONAL ARGININE DEMETHYLASE AND LYSYL-HYDROXYLASE JMJD6"/>
    <property type="match status" value="1"/>
</dbReference>
<dbReference type="Pfam" id="PF02373">
    <property type="entry name" value="JmjC"/>
    <property type="match status" value="1"/>
</dbReference>
<dbReference type="SMART" id="SM00558">
    <property type="entry name" value="JmjC"/>
    <property type="match status" value="1"/>
</dbReference>
<dbReference type="SUPFAM" id="SSF51197">
    <property type="entry name" value="Clavaminate synthase-like"/>
    <property type="match status" value="1"/>
</dbReference>
<dbReference type="PROSITE" id="PS51184">
    <property type="entry name" value="JMJC"/>
    <property type="match status" value="1"/>
</dbReference>
<keyword id="KW-0156">Chromatin regulator</keyword>
<keyword id="KW-0963">Cytoplasm</keyword>
<keyword id="KW-0217">Developmental protein</keyword>
<keyword id="KW-0221">Differentiation</keyword>
<keyword id="KW-0223">Dioxygenase</keyword>
<keyword id="KW-0408">Iron</keyword>
<keyword id="KW-0479">Metal-binding</keyword>
<keyword id="KW-0507">mRNA processing</keyword>
<keyword id="KW-0508">mRNA splicing</keyword>
<keyword id="KW-0539">Nucleus</keyword>
<keyword id="KW-0560">Oxidoreductase</keyword>
<keyword id="KW-1185">Reference proteome</keyword>
<keyword id="KW-0694">RNA-binding</keyword>
<keyword id="KW-0804">Transcription</keyword>
<keyword id="KW-0805">Transcription regulation</keyword>
<sequence>MNHKSKKRIKEAKRSARPELKDSQDWCRHNYCEVFSLNPSTVLDNVERVDAAQLTTEEFIERYEKPYKPVVIINATAGWPANEKWTLERLKRKYRNQKFKCGEDNDGYSVKMKMKYYIDYMEGTRDDSPLYIFDSSYGEHPKRKKILEDYEVPKYFRDDLFQFTGEKRRPPYRWFVMGPPRSGTGIHIDPLGTSAWNSLVHGHKRWCLFPTNTPRELIKVTRDEGGNQQDEAITWFNVVYPRTQLPSWPPEFKPLEILQKPGETVFVPGGWWHVVLNFDTAIAVTQNFASCSNFPVVWHKTVRGRPKLSRKWYRILKQERPELAALADTVDLQESTGIASDSSSDSSSSSSSSSSESCSEDDSSSGAEMMSRRKKKRRLCNGMGNGDITTQDDCASKERSSSR</sequence>
<name>JMD6B_XENLA</name>
<comment type="function">
    <text evidence="2 3">Dioxygenase that can both act as a arginine demethylase and a lysyl-hydroxylase. Acts as a lysyl-hydroxylase that catalyzes 5-hydroxylation on specific lysine residues of target proteins such as u2af2/u2af65 and LUC7L2. Regulates RNA splicing by mediating 5-hydroxylation of u2af2/u2af65, affecting the pre-mRNA splicing activity of u2af2/u2af65. Hydroxylates its own N-terminus, which is required for homooligomerization. In addition to peptidyl-lysine 5-dioxygenase activity, may act as an RNA hydroxylase, as suggested by its ability to bind single strand RNA. Also acts as an arginine demethylase which preferentially demethylates asymmetric dimethylation. Demethylates histone H3 at 'Arg-2' (H3R2me) and histone H4 at 'Arg-3' (H4R3me), including mono-, symmetric di- and asymmetric dimethylated forms, thereby playing a role in histone code. However, histone arginine demethylation may not constitute the primary activity in vivo. In collaboration with brd4, interacts with the positive transcription elongation factor b (P-TEFb) complex in its active form to regulate polymerase II promoter-proximal pause release for transcriptional activation of a large cohort of genes. Demethylates other arginine methylated-proteins such as esr1. Has no histone lysine demethylase activity (By similarity). Required for differentiation of multiple organs during embryogenesis. Acts as a key regulator of hematopoietic differentiation (By similarity).</text>
</comment>
<comment type="catalytic activity">
    <reaction evidence="2">
        <text>L-lysyl-[protein] + 2-oxoglutarate + O2 = (5S)-5-hydroxy-L-lysyl-[protein] + succinate + CO2</text>
        <dbReference type="Rhea" id="RHEA:58360"/>
        <dbReference type="Rhea" id="RHEA-COMP:9752"/>
        <dbReference type="Rhea" id="RHEA-COMP:15144"/>
        <dbReference type="ChEBI" id="CHEBI:15379"/>
        <dbReference type="ChEBI" id="CHEBI:16526"/>
        <dbReference type="ChEBI" id="CHEBI:16810"/>
        <dbReference type="ChEBI" id="CHEBI:29969"/>
        <dbReference type="ChEBI" id="CHEBI:30031"/>
        <dbReference type="ChEBI" id="CHEBI:141843"/>
    </reaction>
</comment>
<comment type="catalytic activity">
    <reaction evidence="2">
        <text>N(omega),N(omega)'-dimethyl-L-arginyl-[protein] + 2 2-oxoglutarate + 2 O2 = L-arginyl-[protein] + 2 formaldehyde + 2 succinate + 2 CO2</text>
        <dbReference type="Rhea" id="RHEA:58348"/>
        <dbReference type="Rhea" id="RHEA-COMP:10532"/>
        <dbReference type="Rhea" id="RHEA-COMP:11992"/>
        <dbReference type="ChEBI" id="CHEBI:15379"/>
        <dbReference type="ChEBI" id="CHEBI:16526"/>
        <dbReference type="ChEBI" id="CHEBI:16810"/>
        <dbReference type="ChEBI" id="CHEBI:16842"/>
        <dbReference type="ChEBI" id="CHEBI:29965"/>
        <dbReference type="ChEBI" id="CHEBI:30031"/>
        <dbReference type="ChEBI" id="CHEBI:88221"/>
    </reaction>
</comment>
<comment type="catalytic activity">
    <reaction evidence="2">
        <text>N(omega),N(omega)'-dimethyl-L-arginyl-[protein] + 2-oxoglutarate + O2 = N(omega)-methyl-L-arginyl-[protein] + formaldehyde + succinate + CO2</text>
        <dbReference type="Rhea" id="RHEA:58472"/>
        <dbReference type="Rhea" id="RHEA-COMP:11990"/>
        <dbReference type="Rhea" id="RHEA-COMP:11992"/>
        <dbReference type="ChEBI" id="CHEBI:15379"/>
        <dbReference type="ChEBI" id="CHEBI:16526"/>
        <dbReference type="ChEBI" id="CHEBI:16810"/>
        <dbReference type="ChEBI" id="CHEBI:16842"/>
        <dbReference type="ChEBI" id="CHEBI:30031"/>
        <dbReference type="ChEBI" id="CHEBI:65280"/>
        <dbReference type="ChEBI" id="CHEBI:88221"/>
    </reaction>
</comment>
<comment type="catalytic activity">
    <reaction evidence="2">
        <text>a 5'-end methyltriphosphate-guanosine-ribonucleotide-snRNA + 2-oxoglutarate + O2 = a 5'-end triphospho-guanosine-ribonucleotide-snRNA + formaldehyde + succinate + CO2 + H(+)</text>
        <dbReference type="Rhea" id="RHEA:58784"/>
        <dbReference type="Rhea" id="RHEA-COMP:15220"/>
        <dbReference type="Rhea" id="RHEA-COMP:15221"/>
        <dbReference type="ChEBI" id="CHEBI:15378"/>
        <dbReference type="ChEBI" id="CHEBI:15379"/>
        <dbReference type="ChEBI" id="CHEBI:16526"/>
        <dbReference type="ChEBI" id="CHEBI:16810"/>
        <dbReference type="ChEBI" id="CHEBI:16842"/>
        <dbReference type="ChEBI" id="CHEBI:30031"/>
        <dbReference type="ChEBI" id="CHEBI:138278"/>
        <dbReference type="ChEBI" id="CHEBI:142789"/>
    </reaction>
</comment>
<comment type="cofactor">
    <cofactor evidence="2">
        <name>Fe(2+)</name>
        <dbReference type="ChEBI" id="CHEBI:29033"/>
    </cofactor>
    <text evidence="2">Binds 1 Fe(2+) ion per subunit.</text>
</comment>
<comment type="subcellular location">
    <subcellularLocation>
        <location evidence="2">Nucleus</location>
        <location evidence="2">Nucleoplasm</location>
    </subcellularLocation>
    <subcellularLocation>
        <location evidence="2">Nucleus</location>
        <location evidence="2">Nucleolus</location>
    </subcellularLocation>
    <subcellularLocation>
        <location evidence="2">Cytoplasm</location>
    </subcellularLocation>
</comment>
<comment type="domain">
    <text evidence="2">The nuclear localization signal motifs are necessary and sufficient to target it into the nucleus.</text>
</comment>
<comment type="PTM">
    <text evidence="2">Hydroxylates its own N-terminus; hydroxylation is required for homooligomerization.</text>
</comment>
<comment type="similarity">
    <text evidence="6">Belongs to the JMJD6 family.</text>
</comment>
<accession>Q7ZX37</accession>
<evidence type="ECO:0000250" key="1"/>
<evidence type="ECO:0000250" key="2">
    <source>
        <dbReference type="UniProtKB" id="Q6NYC1"/>
    </source>
</evidence>
<evidence type="ECO:0000250" key="3">
    <source>
        <dbReference type="UniProtKB" id="Q9ERI5"/>
    </source>
</evidence>
<evidence type="ECO:0000255" key="4">
    <source>
        <dbReference type="PROSITE-ProRule" id="PRU00538"/>
    </source>
</evidence>
<evidence type="ECO:0000256" key="5">
    <source>
        <dbReference type="SAM" id="MobiDB-lite"/>
    </source>
</evidence>
<evidence type="ECO:0000305" key="6"/>
<organism>
    <name type="scientific">Xenopus laevis</name>
    <name type="common">African clawed frog</name>
    <dbReference type="NCBI Taxonomy" id="8355"/>
    <lineage>
        <taxon>Eukaryota</taxon>
        <taxon>Metazoa</taxon>
        <taxon>Chordata</taxon>
        <taxon>Craniata</taxon>
        <taxon>Vertebrata</taxon>
        <taxon>Euteleostomi</taxon>
        <taxon>Amphibia</taxon>
        <taxon>Batrachia</taxon>
        <taxon>Anura</taxon>
        <taxon>Pipoidea</taxon>
        <taxon>Pipidae</taxon>
        <taxon>Xenopodinae</taxon>
        <taxon>Xenopus</taxon>
        <taxon>Xenopus</taxon>
    </lineage>
</organism>
<reference key="1">
    <citation type="submission" date="2003-01" db="EMBL/GenBank/DDBJ databases">
        <authorList>
            <consortium name="NIH - Xenopus Gene Collection (XGC) project"/>
        </authorList>
    </citation>
    <scope>NUCLEOTIDE SEQUENCE [LARGE SCALE MRNA]</scope>
    <source>
        <tissue>Embryo</tissue>
    </source>
</reference>
<feature type="chain" id="PRO_0000129376" description="Bifunctional arginine demethylase and lysyl-hydroxylase JMJD6-B">
    <location>
        <begin position="1"/>
        <end position="403"/>
    </location>
</feature>
<feature type="domain" description="JmjC" evidence="4">
    <location>
        <begin position="141"/>
        <end position="305"/>
    </location>
</feature>
<feature type="region of interest" description="Disordered" evidence="5">
    <location>
        <begin position="336"/>
        <end position="403"/>
    </location>
</feature>
<feature type="short sequence motif" description="Nuclear localization signal 1" evidence="2">
    <location>
        <begin position="6"/>
        <end position="10"/>
    </location>
</feature>
<feature type="short sequence motif" description="Nuclear localization signal 2" evidence="2">
    <location>
        <begin position="91"/>
        <end position="95"/>
    </location>
</feature>
<feature type="short sequence motif" description="Nuclear localization signal 3" evidence="2">
    <location>
        <begin position="141"/>
        <end position="145"/>
    </location>
</feature>
<feature type="short sequence motif" description="Nuclear localization signal 4" evidence="2">
    <location>
        <begin position="167"/>
        <end position="170"/>
    </location>
</feature>
<feature type="short sequence motif" description="Nuclear localization signal 5" evidence="2">
    <location>
        <begin position="373"/>
        <end position="378"/>
    </location>
</feature>
<feature type="compositionally biased region" description="Low complexity" evidence="5">
    <location>
        <begin position="340"/>
        <end position="357"/>
    </location>
</feature>
<feature type="compositionally biased region" description="Basic and acidic residues" evidence="5">
    <location>
        <begin position="394"/>
        <end position="403"/>
    </location>
</feature>
<feature type="binding site" evidence="1">
    <location>
        <position position="184"/>
    </location>
    <ligand>
        <name>substrate</name>
    </ligand>
</feature>
<feature type="binding site" evidence="4">
    <location>
        <position position="187"/>
    </location>
    <ligand>
        <name>Fe cation</name>
        <dbReference type="ChEBI" id="CHEBI:24875"/>
        <note>catalytic</note>
    </ligand>
</feature>
<feature type="binding site" evidence="4">
    <location>
        <position position="189"/>
    </location>
    <ligand>
        <name>Fe cation</name>
        <dbReference type="ChEBI" id="CHEBI:24875"/>
        <note>catalytic</note>
    </ligand>
</feature>
<feature type="binding site" evidence="2">
    <location>
        <position position="197"/>
    </location>
    <ligand>
        <name>2-oxoglutarate</name>
        <dbReference type="ChEBI" id="CHEBI:16810"/>
    </ligand>
</feature>
<feature type="binding site" evidence="1">
    <location>
        <position position="204"/>
    </location>
    <ligand>
        <name>substrate</name>
    </ligand>
</feature>
<feature type="binding site" evidence="4">
    <location>
        <position position="273"/>
    </location>
    <ligand>
        <name>Fe cation</name>
        <dbReference type="ChEBI" id="CHEBI:24875"/>
        <note>catalytic</note>
    </ligand>
</feature>
<feature type="binding site" evidence="2">
    <location>
        <position position="285"/>
    </location>
    <ligand>
        <name>2-oxoglutarate</name>
        <dbReference type="ChEBI" id="CHEBI:16810"/>
    </ligand>
</feature>
<proteinExistence type="evidence at transcript level"/>
<protein>
    <recommendedName>
        <fullName>Bifunctional arginine demethylase and lysyl-hydroxylase JMJD6-B</fullName>
        <ecNumber>1.14.11.-</ecNumber>
    </recommendedName>
    <alternativeName>
        <fullName>Histone arginine demethylase JMJD6-B</fullName>
    </alternativeName>
    <alternativeName>
        <fullName>JmjC domain-containing protein 6-B</fullName>
    </alternativeName>
    <alternativeName>
        <fullName>Jumonji domain-containing protein 6-B</fullName>
    </alternativeName>
    <alternativeName>
        <fullName>Lysyl-hydroxylase JMJD6-B</fullName>
    </alternativeName>
    <alternativeName>
        <fullName>Peptide-lysine 5-dioxygenase JMJD6-B</fullName>
    </alternativeName>
    <alternativeName>
        <fullName>Phosphatidylserine receptor-B</fullName>
        <shortName>Protein PTDSR-B</shortName>
    </alternativeName>
</protein>
<gene>
    <name type="primary">jmjd6-b</name>
    <name type="synonym">ptdsr-b</name>
</gene>